<organism>
    <name type="scientific">Onchocerca volvulus</name>
    <dbReference type="NCBI Taxonomy" id="6282"/>
    <lineage>
        <taxon>Eukaryota</taxon>
        <taxon>Metazoa</taxon>
        <taxon>Ecdysozoa</taxon>
        <taxon>Nematoda</taxon>
        <taxon>Chromadorea</taxon>
        <taxon>Rhabditida</taxon>
        <taxon>Spirurina</taxon>
        <taxon>Spiruromorpha</taxon>
        <taxon>Filarioidea</taxon>
        <taxon>Onchocercidae</taxon>
        <taxon>Onchocerca</taxon>
    </lineage>
</organism>
<sequence>KLIDELEEYKKRYDEALKAHQADREVIDDLLVKLSNLEAEINLLRRRVSNLEEEVSRIKKDNLYFVNELNKARANLDQETLNRIDFQNQVQTLLEEIDFMRRVHDQEISELQAMAARDTTSENREYFKNELSSAIRDIRAEYDQICNMNRTDMESWYKLKVQEIQTQSTRQNLEQGYAKEEVKRLRVQLSDLRGKLADLEGRNSLLEKQMQELNYQLEDDQRSYEAALNDRDAQIRKMREECQALMMELQMLLDTKQTLDAEIAIYRKMLEGEENRAGLRQLVEQVVKTHGLSEIGETESIRVLKGETASRTSFQRSAKGNVSIQDASSDGKFILLENTHRSKEEPIGEWRLKRKIDGKREIVYTFPRDFILKPGKTVKIWARGQGVYSPPDQLVFDAEDSFGVGSNVQTILFNKEGEERASHIQRSSHTIS</sequence>
<dbReference type="EMBL" id="X68558">
    <property type="protein sequence ID" value="CAA48561.1"/>
    <property type="molecule type" value="mRNA"/>
</dbReference>
<dbReference type="PIR" id="S26432">
    <property type="entry name" value="S26432"/>
</dbReference>
<dbReference type="SMR" id="P31732"/>
<dbReference type="STRING" id="6282.P31732"/>
<dbReference type="HOGENOM" id="CLU_012560_7_0_1"/>
<dbReference type="Proteomes" id="UP000024404">
    <property type="component" value="Unassembled WGS sequence"/>
</dbReference>
<dbReference type="GO" id="GO:0005882">
    <property type="term" value="C:intermediate filament"/>
    <property type="evidence" value="ECO:0007669"/>
    <property type="project" value="UniProtKB-KW"/>
</dbReference>
<dbReference type="GO" id="GO:0005635">
    <property type="term" value="C:nuclear envelope"/>
    <property type="evidence" value="ECO:0007669"/>
    <property type="project" value="TreeGrafter"/>
</dbReference>
<dbReference type="GO" id="GO:0005652">
    <property type="term" value="C:nuclear lamina"/>
    <property type="evidence" value="ECO:0007669"/>
    <property type="project" value="TreeGrafter"/>
</dbReference>
<dbReference type="GO" id="GO:0005200">
    <property type="term" value="F:structural constituent of cytoskeleton"/>
    <property type="evidence" value="ECO:0007669"/>
    <property type="project" value="TreeGrafter"/>
</dbReference>
<dbReference type="GO" id="GO:0031507">
    <property type="term" value="P:heterochromatin formation"/>
    <property type="evidence" value="ECO:0007669"/>
    <property type="project" value="TreeGrafter"/>
</dbReference>
<dbReference type="GO" id="GO:0006998">
    <property type="term" value="P:nuclear envelope organization"/>
    <property type="evidence" value="ECO:0007669"/>
    <property type="project" value="TreeGrafter"/>
</dbReference>
<dbReference type="GO" id="GO:0007097">
    <property type="term" value="P:nuclear migration"/>
    <property type="evidence" value="ECO:0007669"/>
    <property type="project" value="TreeGrafter"/>
</dbReference>
<dbReference type="GO" id="GO:0051664">
    <property type="term" value="P:nuclear pore localization"/>
    <property type="evidence" value="ECO:0007669"/>
    <property type="project" value="TreeGrafter"/>
</dbReference>
<dbReference type="GO" id="GO:0090435">
    <property type="term" value="P:protein localization to nuclear envelope"/>
    <property type="evidence" value="ECO:0007669"/>
    <property type="project" value="TreeGrafter"/>
</dbReference>
<dbReference type="FunFam" id="1.20.5.1160:FF:000016">
    <property type="entry name" value="Intermediate filament protein A"/>
    <property type="match status" value="1"/>
</dbReference>
<dbReference type="FunFam" id="2.60.40.1260:FF:000003">
    <property type="entry name" value="Intermediate filament protein A"/>
    <property type="match status" value="1"/>
</dbReference>
<dbReference type="FunFam" id="1.20.5.170:FF:000058">
    <property type="entry name" value="Intermediate filament protein B"/>
    <property type="match status" value="1"/>
</dbReference>
<dbReference type="FunFam" id="1.20.5.500:FF:000001">
    <property type="entry name" value="Type II keratin 23"/>
    <property type="match status" value="1"/>
</dbReference>
<dbReference type="Gene3D" id="1.20.5.170">
    <property type="match status" value="1"/>
</dbReference>
<dbReference type="Gene3D" id="2.60.40.1260">
    <property type="entry name" value="Lamin Tail domain"/>
    <property type="match status" value="1"/>
</dbReference>
<dbReference type="Gene3D" id="1.20.5.500">
    <property type="entry name" value="Single helix bin"/>
    <property type="match status" value="1"/>
</dbReference>
<dbReference type="Gene3D" id="1.20.5.1160">
    <property type="entry name" value="Vasodilator-stimulated phosphoprotein"/>
    <property type="match status" value="1"/>
</dbReference>
<dbReference type="InterPro" id="IPR018039">
    <property type="entry name" value="IF_conserved"/>
</dbReference>
<dbReference type="InterPro" id="IPR039008">
    <property type="entry name" value="IF_rod_dom"/>
</dbReference>
<dbReference type="InterPro" id="IPR001322">
    <property type="entry name" value="Lamin_tail_dom"/>
</dbReference>
<dbReference type="InterPro" id="IPR036415">
    <property type="entry name" value="Lamin_tail_dom_sf"/>
</dbReference>
<dbReference type="PANTHER" id="PTHR45721:SF12">
    <property type="entry name" value="INTERMEDIATE FILAMENT PROTEIN IFA-1"/>
    <property type="match status" value="1"/>
</dbReference>
<dbReference type="PANTHER" id="PTHR45721">
    <property type="entry name" value="LAMIN DM0-RELATED"/>
    <property type="match status" value="1"/>
</dbReference>
<dbReference type="Pfam" id="PF00038">
    <property type="entry name" value="Filament"/>
    <property type="match status" value="1"/>
</dbReference>
<dbReference type="Pfam" id="PF00932">
    <property type="entry name" value="LTD"/>
    <property type="match status" value="1"/>
</dbReference>
<dbReference type="SMART" id="SM01391">
    <property type="entry name" value="Filament"/>
    <property type="match status" value="1"/>
</dbReference>
<dbReference type="SUPFAM" id="SSF64593">
    <property type="entry name" value="Intermediate filament protein, coiled coil region"/>
    <property type="match status" value="1"/>
</dbReference>
<dbReference type="SUPFAM" id="SSF74853">
    <property type="entry name" value="Lamin A/C globular tail domain"/>
    <property type="match status" value="1"/>
</dbReference>
<dbReference type="PROSITE" id="PS00226">
    <property type="entry name" value="IF_ROD_1"/>
    <property type="match status" value="1"/>
</dbReference>
<dbReference type="PROSITE" id="PS51842">
    <property type="entry name" value="IF_ROD_2"/>
    <property type="match status" value="1"/>
</dbReference>
<dbReference type="PROSITE" id="PS51841">
    <property type="entry name" value="LTD"/>
    <property type="match status" value="1"/>
</dbReference>
<name>OV71_ONCVO</name>
<reference key="1">
    <citation type="journal article" date="1994" name="Parasitol. Res.">
        <title>Onchocerca volvulus and Acanthocheilonema viteae: cloning of cDNAs for muscle-cell intermediate filaments.</title>
        <authorList>
            <person name="Seeber F."/>
            <person name="Hoefle W."/>
            <person name="Kern A."/>
            <person name="Lucius R."/>
        </authorList>
    </citation>
    <scope>NUCLEOTIDE SEQUENCE [MRNA]</scope>
    <source>
        <tissue>Muscle</tissue>
    </source>
</reference>
<keyword id="KW-0175">Coiled coil</keyword>
<keyword id="KW-0403">Intermediate filament</keyword>
<keyword id="KW-1185">Reference proteome</keyword>
<proteinExistence type="evidence at transcript level"/>
<accession>P31732</accession>
<comment type="similarity">
    <text evidence="2">Belongs to the intermediate filament family.</text>
</comment>
<protein>
    <recommendedName>
        <fullName>Muscle cell intermediate filament protein OV71</fullName>
    </recommendedName>
</protein>
<feature type="chain" id="PRO_0000063859" description="Muscle cell intermediate filament protein OV71">
    <location>
        <begin position="1" status="less than"/>
        <end position="432"/>
    </location>
</feature>
<feature type="domain" description="IF rod" evidence="2">
    <location>
        <begin position="1" status="less than"/>
        <end position="277"/>
    </location>
</feature>
<feature type="domain" description="LTD" evidence="1">
    <location>
        <begin position="310"/>
        <end position="427"/>
    </location>
</feature>
<feature type="region of interest" description="Coil 1B">
    <location>
        <begin position="1" status="less than"/>
        <end position="111"/>
    </location>
</feature>
<feature type="region of interest" description="Linker 12">
    <location>
        <begin position="112"/>
        <end position="128"/>
    </location>
</feature>
<feature type="region of interest" description="Coil 2">
    <location>
        <begin position="129"/>
        <end position="277"/>
    </location>
</feature>
<feature type="region of interest" description="Tail">
    <location>
        <begin position="278"/>
        <end position="432"/>
    </location>
</feature>
<feature type="non-terminal residue">
    <location>
        <position position="1"/>
    </location>
</feature>
<gene>
    <name type="primary">OV71</name>
</gene>
<evidence type="ECO:0000255" key="1">
    <source>
        <dbReference type="PROSITE-ProRule" id="PRU01187"/>
    </source>
</evidence>
<evidence type="ECO:0000255" key="2">
    <source>
        <dbReference type="PROSITE-ProRule" id="PRU01188"/>
    </source>
</evidence>